<comment type="function">
    <text evidence="1">Essential transcriptional regulator necessary for development and differentiation of erythroid and megakaryocytic lineages. Alters histone methylation by recruiting histone methyltransferase to target genes promoters. Plays a role in heterochromatin formation (By similarity).</text>
</comment>
<comment type="subcellular location">
    <subcellularLocation>
        <location evidence="1">Nucleus</location>
    </subcellularLocation>
</comment>
<comment type="domain">
    <text evidence="1">The zinc finger domain is essential for erythroid expansion and acts as an activation domain whereas non finger domain serves as repression domain.</text>
</comment>
<organism>
    <name type="scientific">Xenopus laevis</name>
    <name type="common">African clawed frog</name>
    <dbReference type="NCBI Taxonomy" id="8355"/>
    <lineage>
        <taxon>Eukaryota</taxon>
        <taxon>Metazoa</taxon>
        <taxon>Chordata</taxon>
        <taxon>Craniata</taxon>
        <taxon>Vertebrata</taxon>
        <taxon>Euteleostomi</taxon>
        <taxon>Amphibia</taxon>
        <taxon>Batrachia</taxon>
        <taxon>Anura</taxon>
        <taxon>Pipoidea</taxon>
        <taxon>Pipidae</taxon>
        <taxon>Xenopodinae</taxon>
        <taxon>Xenopus</taxon>
        <taxon>Xenopus</taxon>
    </lineage>
</organism>
<keyword id="KW-0156">Chromatin regulator</keyword>
<keyword id="KW-0217">Developmental protein</keyword>
<keyword id="KW-0238">DNA-binding</keyword>
<keyword id="KW-0479">Metal-binding</keyword>
<keyword id="KW-0539">Nucleus</keyword>
<keyword id="KW-1185">Reference proteome</keyword>
<keyword id="KW-0677">Repeat</keyword>
<keyword id="KW-0804">Transcription</keyword>
<keyword id="KW-0805">Transcription regulation</keyword>
<keyword id="KW-0862">Zinc</keyword>
<keyword id="KW-0863">Zinc-finger</keyword>
<reference key="1">
    <citation type="submission" date="2004-07" db="EMBL/GenBank/DDBJ databases">
        <authorList>
            <consortium name="NIH - Xenopus Gene Collection (XGC) project"/>
        </authorList>
    </citation>
    <scope>NUCLEOTIDE SEQUENCE [LARGE SCALE MRNA]</scope>
    <source>
        <tissue>Spleen</tissue>
    </source>
</reference>
<gene>
    <name type="primary">gfi1b</name>
</gene>
<accession>Q6DCW1</accession>
<feature type="chain" id="PRO_0000306330" description="Zinc finger protein Gfi-1b">
    <location>
        <begin position="1"/>
        <end position="343"/>
    </location>
</feature>
<feature type="zinc finger region" description="C2H2-type 1" evidence="2">
    <location>
        <begin position="176"/>
        <end position="199"/>
    </location>
</feature>
<feature type="zinc finger region" description="C2H2-type 2" evidence="2">
    <location>
        <begin position="205"/>
        <end position="227"/>
    </location>
</feature>
<feature type="zinc finger region" description="C2H2-type 3" evidence="2">
    <location>
        <begin position="233"/>
        <end position="255"/>
    </location>
</feature>
<feature type="zinc finger region" description="C2H2-type 4" evidence="2">
    <location>
        <begin position="261"/>
        <end position="283"/>
    </location>
</feature>
<feature type="zinc finger region" description="C2H2-type 5" evidence="2">
    <location>
        <begin position="289"/>
        <end position="311"/>
    </location>
</feature>
<feature type="zinc finger region" description="C2H2-type 6" evidence="2">
    <location>
        <begin position="317"/>
        <end position="340"/>
    </location>
</feature>
<feature type="region of interest" description="Mediates repression of transcription" evidence="1">
    <location>
        <begin position="1"/>
        <end position="20"/>
    </location>
</feature>
<feature type="region of interest" description="SNAG domain" evidence="1">
    <location>
        <begin position="1"/>
        <end position="20"/>
    </location>
</feature>
<feature type="region of interest" description="Disordered" evidence="3">
    <location>
        <begin position="51"/>
        <end position="77"/>
    </location>
</feature>
<feature type="compositionally biased region" description="Basic and acidic residues" evidence="3">
    <location>
        <begin position="67"/>
        <end position="77"/>
    </location>
</feature>
<name>GFI1B_XENLA</name>
<protein>
    <recommendedName>
        <fullName>Zinc finger protein Gfi-1b</fullName>
    </recommendedName>
    <alternativeName>
        <fullName>Growth factor independent protein 1B</fullName>
    </alternativeName>
</protein>
<dbReference type="EMBL" id="BC077878">
    <property type="protein sequence ID" value="AAH77878.1"/>
    <property type="molecule type" value="mRNA"/>
</dbReference>
<dbReference type="RefSeq" id="NP_001087000.1">
    <property type="nucleotide sequence ID" value="NM_001093531.1"/>
</dbReference>
<dbReference type="SMR" id="Q6DCW1"/>
<dbReference type="DNASU" id="446835"/>
<dbReference type="GeneID" id="446835"/>
<dbReference type="KEGG" id="xla:446835"/>
<dbReference type="AGR" id="Xenbase:XB-GENE-944429"/>
<dbReference type="CTD" id="446835"/>
<dbReference type="Xenbase" id="XB-GENE-944429">
    <property type="gene designation" value="gfi1b.L"/>
</dbReference>
<dbReference type="OrthoDB" id="6155966at2759"/>
<dbReference type="Proteomes" id="UP000186698">
    <property type="component" value="Chromosome 8L"/>
</dbReference>
<dbReference type="Bgee" id="446835">
    <property type="expression patterns" value="Expressed in liver and 11 other cell types or tissues"/>
</dbReference>
<dbReference type="GO" id="GO:0005694">
    <property type="term" value="C:chromosome"/>
    <property type="evidence" value="ECO:0000318"/>
    <property type="project" value="GO_Central"/>
</dbReference>
<dbReference type="GO" id="GO:0005634">
    <property type="term" value="C:nucleus"/>
    <property type="evidence" value="ECO:0007669"/>
    <property type="project" value="UniProtKB-SubCell"/>
</dbReference>
<dbReference type="GO" id="GO:0043035">
    <property type="term" value="F:chromatin insulator sequence binding"/>
    <property type="evidence" value="ECO:0000318"/>
    <property type="project" value="GO_Central"/>
</dbReference>
<dbReference type="GO" id="GO:0000981">
    <property type="term" value="F:DNA-binding transcription factor activity, RNA polymerase II-specific"/>
    <property type="evidence" value="ECO:0007669"/>
    <property type="project" value="TreeGrafter"/>
</dbReference>
<dbReference type="GO" id="GO:0000978">
    <property type="term" value="F:RNA polymerase II cis-regulatory region sequence-specific DNA binding"/>
    <property type="evidence" value="ECO:0007669"/>
    <property type="project" value="TreeGrafter"/>
</dbReference>
<dbReference type="GO" id="GO:0008270">
    <property type="term" value="F:zinc ion binding"/>
    <property type="evidence" value="ECO:0007669"/>
    <property type="project" value="UniProtKB-KW"/>
</dbReference>
<dbReference type="GO" id="GO:0006325">
    <property type="term" value="P:chromatin organization"/>
    <property type="evidence" value="ECO:0007669"/>
    <property type="project" value="UniProtKB-KW"/>
</dbReference>
<dbReference type="GO" id="GO:0006357">
    <property type="term" value="P:regulation of transcription by RNA polymerase II"/>
    <property type="evidence" value="ECO:0000318"/>
    <property type="project" value="GO_Central"/>
</dbReference>
<dbReference type="FunFam" id="3.30.160.60:FF:001397">
    <property type="entry name" value="Datilografo, isoform A"/>
    <property type="match status" value="1"/>
</dbReference>
<dbReference type="FunFam" id="3.30.160.60:FF:000489">
    <property type="entry name" value="Zinc finger protein Gfi-1"/>
    <property type="match status" value="1"/>
</dbReference>
<dbReference type="FunFam" id="3.30.160.60:FF:000148">
    <property type="entry name" value="zinc finger protein Gfi-1"/>
    <property type="match status" value="1"/>
</dbReference>
<dbReference type="FunFam" id="3.30.160.60:FF:000245">
    <property type="entry name" value="zinc finger protein Gfi-1"/>
    <property type="match status" value="1"/>
</dbReference>
<dbReference type="FunFam" id="3.30.160.60:FF:000208">
    <property type="entry name" value="zinc finger protein Gfi-1b"/>
    <property type="match status" value="1"/>
</dbReference>
<dbReference type="FunFam" id="3.30.160.60:FF:000432">
    <property type="entry name" value="zinc finger protein Gfi-1b isoform X1"/>
    <property type="match status" value="1"/>
</dbReference>
<dbReference type="Gene3D" id="3.30.160.60">
    <property type="entry name" value="Classic Zinc Finger"/>
    <property type="match status" value="6"/>
</dbReference>
<dbReference type="InterPro" id="IPR036236">
    <property type="entry name" value="Znf_C2H2_sf"/>
</dbReference>
<dbReference type="InterPro" id="IPR013087">
    <property type="entry name" value="Znf_C2H2_type"/>
</dbReference>
<dbReference type="PANTHER" id="PTHR23226:SF419">
    <property type="entry name" value="FI21258P1-RELATED"/>
    <property type="match status" value="1"/>
</dbReference>
<dbReference type="PANTHER" id="PTHR23226">
    <property type="entry name" value="ZINC FINGER AND SCAN DOMAIN-CONTAINING"/>
    <property type="match status" value="1"/>
</dbReference>
<dbReference type="Pfam" id="PF00096">
    <property type="entry name" value="zf-C2H2"/>
    <property type="match status" value="5"/>
</dbReference>
<dbReference type="SMART" id="SM00355">
    <property type="entry name" value="ZnF_C2H2"/>
    <property type="match status" value="6"/>
</dbReference>
<dbReference type="SUPFAM" id="SSF57667">
    <property type="entry name" value="beta-beta-alpha zinc fingers"/>
    <property type="match status" value="4"/>
</dbReference>
<dbReference type="PROSITE" id="PS00028">
    <property type="entry name" value="ZINC_FINGER_C2H2_1"/>
    <property type="match status" value="6"/>
</dbReference>
<dbReference type="PROSITE" id="PS50157">
    <property type="entry name" value="ZINC_FINGER_C2H2_2"/>
    <property type="match status" value="6"/>
</dbReference>
<evidence type="ECO:0000250" key="1"/>
<evidence type="ECO:0000255" key="2">
    <source>
        <dbReference type="PROSITE-ProRule" id="PRU00042"/>
    </source>
</evidence>
<evidence type="ECO:0000256" key="3">
    <source>
        <dbReference type="SAM" id="MobiDB-lite"/>
    </source>
</evidence>
<sequence length="343" mass="39227">MPRSFLVKSKKTHTYNQHRYVEEQPVTGVDLVATVYHAHCTECPAEFPAFSTDPTEKQHTPENVITEEARSDPGDPREKIPFLSRSISPNSFQGIALSSMRPLKHYDPSPLSAFYTQNFSWDALHSTYGFKQIPSHIHPSMLQNSINLYSCPPRVDSDSDHPINYSMSYSPKMDTYHCVKCSKVFSTSHGLEVHVRRSHSGTRPFVCNICGKSFGHAVSLEQHLNVHSQERSFECKMCGKTFKRSSTLSTHLLIHSDTRPYPCQFCGKRFHQKSDMKKHTYIHTGEKPHKCQVCGKAFSQSSNLITHSRKHTGFKPFSCDLCCKGFQRKVDLRRHRENQHGLK</sequence>
<proteinExistence type="evidence at transcript level"/>